<evidence type="ECO:0000305" key="1"/>
<reference key="1">
    <citation type="journal article" date="1990" name="Virology">
        <title>Sequence characterization of the membrane protein gene of paramyxovirus simian virus 5.</title>
        <authorList>
            <person name="Sheshberadaran H."/>
            <person name="Lamb R.A."/>
        </authorList>
    </citation>
    <scope>NUCLEOTIDE SEQUENCE [GENOMIC RNA]</scope>
</reference>
<reference key="2">
    <citation type="journal article" date="2005" name="J. Virol.">
        <title>Evidence for a new viral late-domain core sequence, FPIV, necessary for budding of a paramyxovirus.</title>
        <authorList>
            <person name="Schmitt A.P."/>
            <person name="Leser G.P."/>
            <person name="Morita E."/>
            <person name="Sundquist W.I."/>
            <person name="Lamb R.A."/>
        </authorList>
    </citation>
    <scope>LATE-BUDDING DOMAIN</scope>
</reference>
<sequence>MPSISIPADPTNPRQSIKAFPIVINSDGGEKGRLVKQLRTTYLNDLDTHEPLVTFINTYGFIYEQDRGNTIVGEDQLGKKREAVTAAMVTLGCGPNLPSLGNVLGQLREFQVTVRKTSSKAEEMVFEIVKYPRIFRGHTLIQKGLVCVSAEKFVKSPGKIQSGMDYLFIPTFLSVTYCPAAIKFQVPGPMLKMRSRYTQSLQLELMIRILCKPDSPLMKVHTPDKEGRGCLVSVWLHVCNIFKSGNKNGSEWQEYWMRKCANMQLEVSIADMWGPTIIIHARGHIPKSAKLFFGKGGWSCHPLHEVVPSVTKTLWSVGCEITKAKAIIQESSISLLVETTDIISPKVKISSKHRRFVKSNWGLFKKTKSLPNLTELE</sequence>
<dbReference type="EMBL" id="M32248">
    <property type="protein sequence ID" value="AAA46901.1"/>
    <property type="molecule type" value="Genomic_RNA"/>
</dbReference>
<dbReference type="EMBL" id="AF052755">
    <property type="protein sequence ID" value="AAC95514.1"/>
    <property type="molecule type" value="Genomic_RNA"/>
</dbReference>
<dbReference type="PIR" id="A34604">
    <property type="entry name" value="MFNZS5"/>
</dbReference>
<dbReference type="SMR" id="P16629"/>
<dbReference type="KEGG" id="vg:3160802"/>
<dbReference type="Proteomes" id="UP000007232">
    <property type="component" value="Segment"/>
</dbReference>
<dbReference type="GO" id="GO:0019031">
    <property type="term" value="C:viral envelope"/>
    <property type="evidence" value="ECO:0007669"/>
    <property type="project" value="UniProtKB-KW"/>
</dbReference>
<dbReference type="GO" id="GO:0039660">
    <property type="term" value="F:structural constituent of virion"/>
    <property type="evidence" value="ECO:0007669"/>
    <property type="project" value="UniProtKB-KW"/>
</dbReference>
<dbReference type="GO" id="GO:0046761">
    <property type="term" value="P:viral budding from plasma membrane"/>
    <property type="evidence" value="ECO:0000314"/>
    <property type="project" value="UniProtKB"/>
</dbReference>
<dbReference type="GO" id="GO:0039702">
    <property type="term" value="P:viral budding via host ESCRT complex"/>
    <property type="evidence" value="ECO:0007669"/>
    <property type="project" value="UniProtKB-KW"/>
</dbReference>
<dbReference type="Gene3D" id="2.70.20.60">
    <property type="entry name" value="Viral matrix protein, C-terminal domain"/>
    <property type="match status" value="1"/>
</dbReference>
<dbReference type="Gene3D" id="2.70.20.50">
    <property type="entry name" value="Viral matrix protein, N-terminal domain"/>
    <property type="match status" value="1"/>
</dbReference>
<dbReference type="InterPro" id="IPR042539">
    <property type="entry name" value="Matrix_C"/>
</dbReference>
<dbReference type="InterPro" id="IPR042540">
    <property type="entry name" value="Matrix_N"/>
</dbReference>
<dbReference type="InterPro" id="IPR055413">
    <property type="entry name" value="Matrix_Paramyxo_C"/>
</dbReference>
<dbReference type="InterPro" id="IPR000982">
    <property type="entry name" value="Matrix_Paramyxo_N"/>
</dbReference>
<dbReference type="Pfam" id="PF23765">
    <property type="entry name" value="Matrix_Paramyxo_C"/>
    <property type="match status" value="1"/>
</dbReference>
<dbReference type="Pfam" id="PF00661">
    <property type="entry name" value="Matrix_Paramyxo_N"/>
    <property type="match status" value="1"/>
</dbReference>
<organism>
    <name type="scientific">Parainfluenza virus 5 (strain W3)</name>
    <name type="common">PIV5</name>
    <name type="synonym">Simian virus 5</name>
    <dbReference type="NCBI Taxonomy" id="11208"/>
    <lineage>
        <taxon>Viruses</taxon>
        <taxon>Riboviria</taxon>
        <taxon>Orthornavirae</taxon>
        <taxon>Negarnaviricota</taxon>
        <taxon>Haploviricotina</taxon>
        <taxon>Monjiviricetes</taxon>
        <taxon>Mononegavirales</taxon>
        <taxon>Paramyxoviridae</taxon>
        <taxon>Rubulavirinae</taxon>
        <taxon>Orthorubulavirus</taxon>
        <taxon>Orthorubulavirus mammalis</taxon>
        <taxon>Mammalian orthorubulavirus 5</taxon>
    </lineage>
</organism>
<feature type="chain" id="PRO_0000142777" description="Matrix protein">
    <location>
        <begin position="1"/>
        <end position="377"/>
    </location>
</feature>
<feature type="short sequence motif" description="FPIV motif">
    <location>
        <begin position="20"/>
        <end position="23"/>
    </location>
</feature>
<keyword id="KW-0945">Host-virus interaction</keyword>
<keyword id="KW-1185">Reference proteome</keyword>
<keyword id="KW-1198">Viral budding</keyword>
<keyword id="KW-1187">Viral budding via the host ESCRT complexes</keyword>
<keyword id="KW-0261">Viral envelope protein</keyword>
<keyword id="KW-0468">Viral matrix protein</keyword>
<keyword id="KW-1188">Viral release from host cell</keyword>
<keyword id="KW-0946">Virion</keyword>
<proteinExistence type="inferred from homology"/>
<gene>
    <name type="primary">M</name>
</gene>
<protein>
    <recommendedName>
        <fullName>Matrix protein</fullName>
    </recommendedName>
    <alternativeName>
        <fullName>Membrane protein</fullName>
    </alternativeName>
</protein>
<accession>P16629</accession>
<name>MATRX_PIV5</name>
<organismHost>
    <name type="scientific">Canis lupus familiaris</name>
    <name type="common">Dog</name>
    <name type="synonym">Canis familiaris</name>
    <dbReference type="NCBI Taxonomy" id="9615"/>
</organismHost>
<organismHost>
    <name type="scientific">Homo sapiens</name>
    <name type="common">Human</name>
    <dbReference type="NCBI Taxonomy" id="9606"/>
</organismHost>
<comment type="function">
    <text>The M protein has a crucial role in virus assembly and interacts with the RNP complex as well as with the viral membrane.</text>
</comment>
<comment type="subcellular location">
    <subcellularLocation>
        <location evidence="1">Virion</location>
    </subcellularLocation>
</comment>
<comment type="domain">
    <text>Late-budding domains (L domains) are short sequence motifs essential for viral particle budding. They recruit proteins of the host ESCRT machinery (Endosomal Sorting Complex Required for Transport) or ESCRT-associated proteins. The matrix protein contains one L domain: a FPIV motif.</text>
</comment>
<comment type="similarity">
    <text evidence="1">Belongs to the morbillivirus/respirovirus/rubulavirus M protein family.</text>
</comment>